<feature type="signal peptide" evidence="2">
    <location>
        <begin position="1"/>
        <end position="15"/>
    </location>
</feature>
<feature type="chain" id="PRO_0000039139" description="Hemagglutinin HA1 chain" evidence="1">
    <location>
        <begin position="16"/>
        <end position="360"/>
    </location>
</feature>
<feature type="glycosylation site" description="N-linked (GlcNAc...) asparagine; by host" evidence="2">
    <location>
        <position position="40"/>
    </location>
</feature>
<feature type="glycosylation site" description="N-linked (GlcNAc...) asparagine; by host" evidence="2">
    <location>
        <position position="74"/>
    </location>
</feature>
<feature type="glycosylation site" description="N-linked (GlcNAc...) asparagine; by host" evidence="2">
    <location>
        <position position="160"/>
    </location>
</feature>
<feature type="glycosylation site" description="N-linked (GlcNAc...) asparagine; by host" evidence="2">
    <location>
        <position position="179"/>
    </location>
</feature>
<feature type="glycosylation site" description="N-linked (GlcNAc...) asparagine; by host" evidence="2">
    <location>
        <position position="246"/>
    </location>
</feature>
<feature type="glycosylation site" description="N-linked (GlcNAc...) asparagine; by host" evidence="2">
    <location>
        <position position="317"/>
    </location>
</feature>
<feature type="glycosylation site" description="N-linked (GlcNAc...) asparagine; by host" evidence="2">
    <location>
        <position position="346"/>
    </location>
</feature>
<feature type="non-terminal residue">
    <location>
        <position position="360"/>
    </location>
</feature>
<comment type="function">
    <text>Binds to sialic acid-containing receptors on the cell surface, bringing about the attachment of the virus particle to the cell. Plays a major role in the determination of host range restriction and virulence. Class I viral fusion protein. Responsible for penetration of the virus into the cell cytoplasm by mediating the fusion of the membrane of the endocytosed virus particle with the endosomal membrane. Low pH in endosomes induce an irreversible conformational change in HA2, releasing the fusion hydrophobic peptide. Several trimers are required to form a competent fusion pore.</text>
</comment>
<comment type="subunit">
    <text>Homotrimer of disulfide-linked HA1-HA2.</text>
</comment>
<comment type="subcellular location">
    <subcellularLocation>
        <location evidence="3">Virion membrane</location>
        <topology evidence="3">Single-pass type I membrane protein</topology>
    </subcellularLocation>
    <subcellularLocation>
        <location>Host apical cell membrane</location>
        <topology>Single-pass type I membrane protein</topology>
    </subcellularLocation>
    <text>Targeted to the apical plasma membrane in epithelial polarized cells through a signal present in the transmembrane domain. Associated with glycosphingolipid- and cholesterol-enriched detergent-resistant lipid rafts.</text>
</comment>
<comment type="PTM">
    <text evidence="1">In natural infection, inactive HA is matured into HA1 and HA2 outside the cell by one or more trypsin-like, arginine-specific endoprotease secreted by the bronchial epithelial cells. One identified protease that may be involved in this process is secreted in lungs by club cells (By similarity).</text>
</comment>
<comment type="PTM">
    <text evidence="1">Palmitoylated.</text>
</comment>
<comment type="miscellaneous">
    <text>Major glycoprotein, comprises over 80% of the envelope proteins present in virus particle.</text>
</comment>
<comment type="miscellaneous">
    <text>The extent of infection into host organism is determined by HA. Influenza viruses bud from the apical surface of polarized epithelial cells (e.g. bronchial epithelial cells) into lumen of lungs and are therefore usually pneumotropic. The reason is that HA is cleaved by tryptase clara which is restricted to lungs. However, HAs of H5 and H7 pantropic avian viruses subtypes can be cleaved by furin and subtilisin-type enzymes, allowing the virus to grow in other organs than lungs.</text>
</comment>
<comment type="miscellaneous">
    <text>The influenza B genome consist of 8 RNA segments. Genetic variation of hemagglutinin and/or neuraminidase genes results in the emergence of new influenza strains. The mechanism of variation can be the result of point mutations or the result of genetic reassortment between segments of two different strains.</text>
</comment>
<comment type="similarity">
    <text evidence="3">Belongs to the influenza viruses hemagglutinin family.</text>
</comment>
<protein>
    <recommendedName>
        <fullName>Hemagglutinin</fullName>
    </recommendedName>
    <component>
        <recommendedName>
            <fullName>Hemagglutinin HA1 chain</fullName>
        </recommendedName>
    </component>
</protein>
<gene>
    <name type="primary">HA</name>
</gene>
<accession>Q67380</accession>
<proteinExistence type="inferred from homology"/>
<name>HEMA_INBVL</name>
<keyword id="KW-1015">Disulfide bond</keyword>
<keyword id="KW-1170">Fusion of virus membrane with host endosomal membrane</keyword>
<keyword id="KW-1168">Fusion of virus membrane with host membrane</keyword>
<keyword id="KW-0325">Glycoprotein</keyword>
<keyword id="KW-0348">Hemagglutinin</keyword>
<keyword id="KW-1032">Host cell membrane</keyword>
<keyword id="KW-1043">Host membrane</keyword>
<keyword id="KW-0945">Host-virus interaction</keyword>
<keyword id="KW-0449">Lipoprotein</keyword>
<keyword id="KW-0472">Membrane</keyword>
<keyword id="KW-0564">Palmitate</keyword>
<keyword id="KW-0732">Signal</keyword>
<keyword id="KW-0812">Transmembrane</keyword>
<keyword id="KW-1161">Viral attachment to host cell</keyword>
<keyword id="KW-0261">Viral envelope protein</keyword>
<keyword id="KW-1162">Viral penetration into host cytoplasm</keyword>
<keyword id="KW-0946">Virion</keyword>
<keyword id="KW-1160">Virus entry into host cell</keyword>
<evidence type="ECO:0000250" key="1"/>
<evidence type="ECO:0000255" key="2"/>
<evidence type="ECO:0000305" key="3"/>
<organism>
    <name type="scientific">Influenza B virus (strain B/Victoria/103/1989)</name>
    <dbReference type="NCBI Taxonomy" id="291803"/>
    <lineage>
        <taxon>Viruses</taxon>
        <taxon>Riboviria</taxon>
        <taxon>Orthornavirae</taxon>
        <taxon>Negarnaviricota</taxon>
        <taxon>Polyploviricotina</taxon>
        <taxon>Insthoviricetes</taxon>
        <taxon>Articulavirales</taxon>
        <taxon>Orthomyxoviridae</taxon>
        <taxon>Betainfluenzavirus</taxon>
        <taxon>Betainfluenzavirus influenzae</taxon>
        <taxon>Influenza B virus</taxon>
    </lineage>
</organism>
<organismHost>
    <name type="scientific">Homo sapiens</name>
    <name type="common">Human</name>
    <dbReference type="NCBI Taxonomy" id="9606"/>
</organismHost>
<dbReference type="EMBL" id="M65176">
    <property type="protein sequence ID" value="AAA43714.1"/>
    <property type="molecule type" value="Genomic_RNA"/>
</dbReference>
<dbReference type="PIR" id="JQ1910">
    <property type="entry name" value="JQ1910"/>
</dbReference>
<dbReference type="SMR" id="Q67380"/>
<dbReference type="GlyCosmos" id="Q67380">
    <property type="glycosylation" value="7 sites, No reported glycans"/>
</dbReference>
<dbReference type="GO" id="GO:0020002">
    <property type="term" value="C:host cell plasma membrane"/>
    <property type="evidence" value="ECO:0007669"/>
    <property type="project" value="UniProtKB-SubCell"/>
</dbReference>
<dbReference type="GO" id="GO:0016020">
    <property type="term" value="C:membrane"/>
    <property type="evidence" value="ECO:0007669"/>
    <property type="project" value="UniProtKB-KW"/>
</dbReference>
<dbReference type="GO" id="GO:0019031">
    <property type="term" value="C:viral envelope"/>
    <property type="evidence" value="ECO:0007669"/>
    <property type="project" value="UniProtKB-KW"/>
</dbReference>
<dbReference type="GO" id="GO:0055036">
    <property type="term" value="C:virion membrane"/>
    <property type="evidence" value="ECO:0007669"/>
    <property type="project" value="UniProtKB-SubCell"/>
</dbReference>
<dbReference type="GO" id="GO:0046789">
    <property type="term" value="F:host cell surface receptor binding"/>
    <property type="evidence" value="ECO:0007669"/>
    <property type="project" value="InterPro"/>
</dbReference>
<dbReference type="GO" id="GO:0039654">
    <property type="term" value="P:fusion of virus membrane with host endosome membrane"/>
    <property type="evidence" value="ECO:0007669"/>
    <property type="project" value="UniProtKB-KW"/>
</dbReference>
<dbReference type="GO" id="GO:0019064">
    <property type="term" value="P:fusion of virus membrane with host plasma membrane"/>
    <property type="evidence" value="ECO:0007669"/>
    <property type="project" value="InterPro"/>
</dbReference>
<dbReference type="GO" id="GO:0046718">
    <property type="term" value="P:symbiont entry into host cell"/>
    <property type="evidence" value="ECO:0007669"/>
    <property type="project" value="UniProtKB-KW"/>
</dbReference>
<dbReference type="GO" id="GO:0019062">
    <property type="term" value="P:virion attachment to host cell"/>
    <property type="evidence" value="ECO:0007669"/>
    <property type="project" value="UniProtKB-KW"/>
</dbReference>
<dbReference type="Gene3D" id="3.90.209.20">
    <property type="match status" value="1"/>
</dbReference>
<dbReference type="Gene3D" id="2.10.77.10">
    <property type="entry name" value="Hemagglutinin Chain A, Domain 2"/>
    <property type="match status" value="1"/>
</dbReference>
<dbReference type="InterPro" id="IPR008980">
    <property type="entry name" value="Capsid_hemagglutn"/>
</dbReference>
<dbReference type="InterPro" id="IPR013828">
    <property type="entry name" value="Hemagglutn_HA1_a/b_dom_sf"/>
</dbReference>
<dbReference type="InterPro" id="IPR001364">
    <property type="entry name" value="Hemagglutn_influenz_A/B"/>
</dbReference>
<dbReference type="Pfam" id="PF00509">
    <property type="entry name" value="Hemagglutinin"/>
    <property type="match status" value="1"/>
</dbReference>
<dbReference type="SUPFAM" id="SSF49818">
    <property type="entry name" value="Viral protein domain"/>
    <property type="match status" value="1"/>
</dbReference>
<reference key="1">
    <citation type="journal article" date="1992" name="J. Gen. Virol.">
        <title>Antigenic and genetic characterization of the haemagglutinins of recent cocirculating strains of influenza B virus.</title>
        <authorList>
            <person name="Rota P.A."/>
            <person name="Hemphill M."/>
            <person name="Whistler T."/>
            <person name="Regnery H.L."/>
            <person name="Kendal A.P."/>
        </authorList>
    </citation>
    <scope>NUCLEOTIDE SEQUENCE [GENOMIC RNA]</scope>
</reference>
<sequence>MKAIIVLLMVVTSNADRICTGITSSNSPHVVKTATQGEVNVTGVIPLTTTPTKSHFANLKGTKTRGKLCPNCLNCTDLDVALARPMCVGTIPSAKASILHEVRPVTSGCFPIMHDRTKIRQLPNLLRGYENIRLSTHNVINAEGAPGGPYRLGTSGSCPNVTSRNGFFATMAWAVPRDNKTATNPLTVEVPYICAKGEDQITVWGFHSDNKAQMKNLYGDSNPQKFTSSANGVTTHYVSQIGGFPNQTEDGGLPQSGRIVVDYMVQKPGKTGTIVYQRGVLLPQKVWCASGRSKVIKGSLPLIGEADCLHAKYGGLNKSKPYYTGEHAKAIGNCPIWVKTPLKLANGTKYRPPAKLLKER</sequence>